<proteinExistence type="inferred from homology"/>
<comment type="similarity">
    <text evidence="1">Belongs to the universal ribosomal protein uL29 family.</text>
</comment>
<evidence type="ECO:0000255" key="1">
    <source>
        <dbReference type="HAMAP-Rule" id="MF_00374"/>
    </source>
</evidence>
<evidence type="ECO:0000305" key="2"/>
<protein>
    <recommendedName>
        <fullName evidence="1">Large ribosomal subunit protein uL29</fullName>
    </recommendedName>
    <alternativeName>
        <fullName evidence="2">50S ribosomal protein L29</fullName>
    </alternativeName>
</protein>
<name>RL29_TRIL1</name>
<sequence length="62" mass="7165">MKANDFRKMAEAELKQKRDELTQELFNLKFQLNTGRLENTGKLGAIRKDIARINTILTESRG</sequence>
<dbReference type="EMBL" id="CP001089">
    <property type="protein sequence ID" value="ACD95075.1"/>
    <property type="molecule type" value="Genomic_DNA"/>
</dbReference>
<dbReference type="RefSeq" id="WP_012469420.1">
    <property type="nucleotide sequence ID" value="NC_010814.1"/>
</dbReference>
<dbReference type="SMR" id="B3E7U3"/>
<dbReference type="STRING" id="398767.Glov_1354"/>
<dbReference type="KEGG" id="glo:Glov_1354"/>
<dbReference type="eggNOG" id="COG0255">
    <property type="taxonomic scope" value="Bacteria"/>
</dbReference>
<dbReference type="HOGENOM" id="CLU_158491_5_2_7"/>
<dbReference type="OrthoDB" id="9815192at2"/>
<dbReference type="Proteomes" id="UP000002420">
    <property type="component" value="Chromosome"/>
</dbReference>
<dbReference type="GO" id="GO:0022625">
    <property type="term" value="C:cytosolic large ribosomal subunit"/>
    <property type="evidence" value="ECO:0007669"/>
    <property type="project" value="TreeGrafter"/>
</dbReference>
<dbReference type="GO" id="GO:0003735">
    <property type="term" value="F:structural constituent of ribosome"/>
    <property type="evidence" value="ECO:0007669"/>
    <property type="project" value="InterPro"/>
</dbReference>
<dbReference type="GO" id="GO:0006412">
    <property type="term" value="P:translation"/>
    <property type="evidence" value="ECO:0007669"/>
    <property type="project" value="UniProtKB-UniRule"/>
</dbReference>
<dbReference type="CDD" id="cd00427">
    <property type="entry name" value="Ribosomal_L29_HIP"/>
    <property type="match status" value="1"/>
</dbReference>
<dbReference type="FunFam" id="1.10.287.310:FF:000001">
    <property type="entry name" value="50S ribosomal protein L29"/>
    <property type="match status" value="1"/>
</dbReference>
<dbReference type="Gene3D" id="1.10.287.310">
    <property type="match status" value="1"/>
</dbReference>
<dbReference type="HAMAP" id="MF_00374">
    <property type="entry name" value="Ribosomal_uL29"/>
    <property type="match status" value="1"/>
</dbReference>
<dbReference type="InterPro" id="IPR050063">
    <property type="entry name" value="Ribosomal_protein_uL29"/>
</dbReference>
<dbReference type="InterPro" id="IPR001854">
    <property type="entry name" value="Ribosomal_uL29"/>
</dbReference>
<dbReference type="InterPro" id="IPR018254">
    <property type="entry name" value="Ribosomal_uL29_CS"/>
</dbReference>
<dbReference type="InterPro" id="IPR036049">
    <property type="entry name" value="Ribosomal_uL29_sf"/>
</dbReference>
<dbReference type="NCBIfam" id="TIGR00012">
    <property type="entry name" value="L29"/>
    <property type="match status" value="1"/>
</dbReference>
<dbReference type="PANTHER" id="PTHR10916">
    <property type="entry name" value="60S RIBOSOMAL PROTEIN L35/50S RIBOSOMAL PROTEIN L29"/>
    <property type="match status" value="1"/>
</dbReference>
<dbReference type="PANTHER" id="PTHR10916:SF0">
    <property type="entry name" value="LARGE RIBOSOMAL SUBUNIT PROTEIN UL29C"/>
    <property type="match status" value="1"/>
</dbReference>
<dbReference type="Pfam" id="PF00831">
    <property type="entry name" value="Ribosomal_L29"/>
    <property type="match status" value="1"/>
</dbReference>
<dbReference type="SUPFAM" id="SSF46561">
    <property type="entry name" value="Ribosomal protein L29 (L29p)"/>
    <property type="match status" value="1"/>
</dbReference>
<dbReference type="PROSITE" id="PS00579">
    <property type="entry name" value="RIBOSOMAL_L29"/>
    <property type="match status" value="1"/>
</dbReference>
<organism>
    <name type="scientific">Trichlorobacter lovleyi (strain ATCC BAA-1151 / DSM 17278 / SZ)</name>
    <name type="common">Geobacter lovleyi</name>
    <dbReference type="NCBI Taxonomy" id="398767"/>
    <lineage>
        <taxon>Bacteria</taxon>
        <taxon>Pseudomonadati</taxon>
        <taxon>Thermodesulfobacteriota</taxon>
        <taxon>Desulfuromonadia</taxon>
        <taxon>Geobacterales</taxon>
        <taxon>Geobacteraceae</taxon>
        <taxon>Trichlorobacter</taxon>
    </lineage>
</organism>
<accession>B3E7U3</accession>
<reference key="1">
    <citation type="submission" date="2008-05" db="EMBL/GenBank/DDBJ databases">
        <title>Complete sequence of chromosome of Geobacter lovleyi SZ.</title>
        <authorList>
            <consortium name="US DOE Joint Genome Institute"/>
            <person name="Lucas S."/>
            <person name="Copeland A."/>
            <person name="Lapidus A."/>
            <person name="Glavina del Rio T."/>
            <person name="Dalin E."/>
            <person name="Tice H."/>
            <person name="Bruce D."/>
            <person name="Goodwin L."/>
            <person name="Pitluck S."/>
            <person name="Chertkov O."/>
            <person name="Meincke L."/>
            <person name="Brettin T."/>
            <person name="Detter J.C."/>
            <person name="Han C."/>
            <person name="Tapia R."/>
            <person name="Kuske C.R."/>
            <person name="Schmutz J."/>
            <person name="Larimer F."/>
            <person name="Land M."/>
            <person name="Hauser L."/>
            <person name="Kyrpides N."/>
            <person name="Mikhailova N."/>
            <person name="Sung Y."/>
            <person name="Fletcher K.E."/>
            <person name="Ritalahti K.M."/>
            <person name="Loeffler F.E."/>
            <person name="Richardson P."/>
        </authorList>
    </citation>
    <scope>NUCLEOTIDE SEQUENCE [LARGE SCALE GENOMIC DNA]</scope>
    <source>
        <strain>ATCC BAA-1151 / DSM 17278 / SZ</strain>
    </source>
</reference>
<feature type="chain" id="PRO_1000194018" description="Large ribosomal subunit protein uL29">
    <location>
        <begin position="1"/>
        <end position="62"/>
    </location>
</feature>
<gene>
    <name evidence="1" type="primary">rpmC</name>
    <name type="ordered locus">Glov_1354</name>
</gene>
<keyword id="KW-1185">Reference proteome</keyword>
<keyword id="KW-0687">Ribonucleoprotein</keyword>
<keyword id="KW-0689">Ribosomal protein</keyword>